<sequence length="584" mass="66370">MRTHYCADVNEQHIGETVTVAGWVASRRDHGGVIFIDLRDKDEVFQLVCDPADNADAHKIAEEVRDQFVLIATGKVRARGEGLENPNLKTGKVEMVVDSLTIENRSKPMPFELNDEKVNEEIKLKYRYLELRTQKAYDTFKLRSKATIATRNALDELGFLEVETPILTKSTPEGARDYLVPSRVHGGEFYALPQSPQLFKQLLMVGGFDRYFQIAKCFRDEDLRADRQPEFTQIDVEMSFCDQEDVITVAEKLISDVFIKCGFDVPTKFNRMTHSEAMEKYGSDKPDMRYDLAMVDVIDIFERCDNEIFSGIAKMPKKNRIKALRVPKGDEIFSKRQMKGFEDYVRKFGAQGLGYFQMKEDGLKGPLTKFFTEDDIQAIIDRCGLEVGDAVFFGAGEKKLVWDYMGRFRIYLAETMDIIPEDTFEFLWVMDFPMFEVEDGKVKALHHPFTQPKSLDFNDIEEIESIAYDVVLNGTELGGGSIRIHKEDVQEEVFKLLGISEEEAQSKFGFLLDALKFGAPPHGGFALGLDRMIMIMTGASSIRDVIAFPKTQKAQCLLTQAPSEVDNEQLKELSIRVRQAAPTA</sequence>
<organism>
    <name type="scientific">Sulfurovum sp. (strain NBC37-1)</name>
    <dbReference type="NCBI Taxonomy" id="387093"/>
    <lineage>
        <taxon>Bacteria</taxon>
        <taxon>Pseudomonadati</taxon>
        <taxon>Campylobacterota</taxon>
        <taxon>Epsilonproteobacteria</taxon>
        <taxon>Campylobacterales</taxon>
        <taxon>Sulfurovaceae</taxon>
        <taxon>Sulfurovum</taxon>
    </lineage>
</organism>
<comment type="function">
    <text evidence="1">Aspartyl-tRNA synthetase with relaxed tRNA specificity since it is able to aspartylate not only its cognate tRNA(Asp) but also tRNA(Asn). Reaction proceeds in two steps: L-aspartate is first activated by ATP to form Asp-AMP and then transferred to the acceptor end of tRNA(Asp/Asn).</text>
</comment>
<comment type="catalytic activity">
    <reaction evidence="1">
        <text>tRNA(Asx) + L-aspartate + ATP = L-aspartyl-tRNA(Asx) + AMP + diphosphate</text>
        <dbReference type="Rhea" id="RHEA:18349"/>
        <dbReference type="Rhea" id="RHEA-COMP:9710"/>
        <dbReference type="Rhea" id="RHEA-COMP:9711"/>
        <dbReference type="ChEBI" id="CHEBI:29991"/>
        <dbReference type="ChEBI" id="CHEBI:30616"/>
        <dbReference type="ChEBI" id="CHEBI:33019"/>
        <dbReference type="ChEBI" id="CHEBI:78442"/>
        <dbReference type="ChEBI" id="CHEBI:78516"/>
        <dbReference type="ChEBI" id="CHEBI:456215"/>
        <dbReference type="EC" id="6.1.1.23"/>
    </reaction>
</comment>
<comment type="subunit">
    <text evidence="1">Homodimer.</text>
</comment>
<comment type="subcellular location">
    <subcellularLocation>
        <location evidence="1">Cytoplasm</location>
    </subcellularLocation>
</comment>
<comment type="similarity">
    <text evidence="1">Belongs to the class-II aminoacyl-tRNA synthetase family. Type 1 subfamily.</text>
</comment>
<gene>
    <name evidence="1" type="primary">aspS</name>
    <name type="ordered locus">SUN_1506</name>
</gene>
<accession>A6QAE8</accession>
<feature type="chain" id="PRO_1000006773" description="Aspartate--tRNA(Asp/Asn) ligase">
    <location>
        <begin position="1"/>
        <end position="584"/>
    </location>
</feature>
<feature type="region of interest" description="Aspartate" evidence="1">
    <location>
        <begin position="197"/>
        <end position="200"/>
    </location>
</feature>
<feature type="binding site" evidence="1">
    <location>
        <position position="173"/>
    </location>
    <ligand>
        <name>L-aspartate</name>
        <dbReference type="ChEBI" id="CHEBI:29991"/>
    </ligand>
</feature>
<feature type="binding site" evidence="1">
    <location>
        <begin position="219"/>
        <end position="221"/>
    </location>
    <ligand>
        <name>ATP</name>
        <dbReference type="ChEBI" id="CHEBI:30616"/>
    </ligand>
</feature>
<feature type="binding site" evidence="1">
    <location>
        <position position="219"/>
    </location>
    <ligand>
        <name>L-aspartate</name>
        <dbReference type="ChEBI" id="CHEBI:29991"/>
    </ligand>
</feature>
<feature type="binding site" evidence="1">
    <location>
        <position position="228"/>
    </location>
    <ligand>
        <name>ATP</name>
        <dbReference type="ChEBI" id="CHEBI:30616"/>
    </ligand>
</feature>
<feature type="binding site" evidence="1">
    <location>
        <position position="446"/>
    </location>
    <ligand>
        <name>L-aspartate</name>
        <dbReference type="ChEBI" id="CHEBI:29991"/>
    </ligand>
</feature>
<feature type="binding site" evidence="1">
    <location>
        <position position="476"/>
    </location>
    <ligand>
        <name>ATP</name>
        <dbReference type="ChEBI" id="CHEBI:30616"/>
    </ligand>
</feature>
<feature type="binding site" evidence="1">
    <location>
        <position position="483"/>
    </location>
    <ligand>
        <name>L-aspartate</name>
        <dbReference type="ChEBI" id="CHEBI:29991"/>
    </ligand>
</feature>
<feature type="binding site" evidence="1">
    <location>
        <begin position="528"/>
        <end position="531"/>
    </location>
    <ligand>
        <name>ATP</name>
        <dbReference type="ChEBI" id="CHEBI:30616"/>
    </ligand>
</feature>
<feature type="site" description="Important for tRNA non-discrimination" evidence="1">
    <location>
        <position position="30"/>
    </location>
</feature>
<feature type="site" description="Important for tRNA non-discrimination" evidence="1">
    <location>
        <position position="82"/>
    </location>
</feature>
<evidence type="ECO:0000255" key="1">
    <source>
        <dbReference type="HAMAP-Rule" id="MF_00044"/>
    </source>
</evidence>
<protein>
    <recommendedName>
        <fullName evidence="1">Aspartate--tRNA(Asp/Asn) ligase</fullName>
        <ecNumber evidence="1">6.1.1.23</ecNumber>
    </recommendedName>
    <alternativeName>
        <fullName evidence="1">Aspartyl-tRNA synthetase</fullName>
        <shortName evidence="1">AspRS</shortName>
    </alternativeName>
    <alternativeName>
        <fullName evidence="1">Non-discriminating aspartyl-tRNA synthetase</fullName>
        <shortName evidence="1">ND-AspRS</shortName>
    </alternativeName>
</protein>
<dbReference type="EC" id="6.1.1.23" evidence="1"/>
<dbReference type="EMBL" id="AP009179">
    <property type="protein sequence ID" value="BAF72457.1"/>
    <property type="molecule type" value="Genomic_DNA"/>
</dbReference>
<dbReference type="RefSeq" id="WP_012083259.1">
    <property type="nucleotide sequence ID" value="NC_009663.1"/>
</dbReference>
<dbReference type="SMR" id="A6QAE8"/>
<dbReference type="STRING" id="387093.SUN_1506"/>
<dbReference type="KEGG" id="sun:SUN_1506"/>
<dbReference type="eggNOG" id="COG0173">
    <property type="taxonomic scope" value="Bacteria"/>
</dbReference>
<dbReference type="HOGENOM" id="CLU_014330_3_2_7"/>
<dbReference type="OrthoDB" id="9802326at2"/>
<dbReference type="Proteomes" id="UP000006378">
    <property type="component" value="Chromosome"/>
</dbReference>
<dbReference type="GO" id="GO:0005737">
    <property type="term" value="C:cytoplasm"/>
    <property type="evidence" value="ECO:0007669"/>
    <property type="project" value="UniProtKB-SubCell"/>
</dbReference>
<dbReference type="GO" id="GO:0004815">
    <property type="term" value="F:aspartate-tRNA ligase activity"/>
    <property type="evidence" value="ECO:0007669"/>
    <property type="project" value="UniProtKB-UniRule"/>
</dbReference>
<dbReference type="GO" id="GO:0050560">
    <property type="term" value="F:aspartate-tRNA(Asn) ligase activity"/>
    <property type="evidence" value="ECO:0007669"/>
    <property type="project" value="UniProtKB-EC"/>
</dbReference>
<dbReference type="GO" id="GO:0005524">
    <property type="term" value="F:ATP binding"/>
    <property type="evidence" value="ECO:0007669"/>
    <property type="project" value="UniProtKB-UniRule"/>
</dbReference>
<dbReference type="GO" id="GO:0003676">
    <property type="term" value="F:nucleic acid binding"/>
    <property type="evidence" value="ECO:0007669"/>
    <property type="project" value="InterPro"/>
</dbReference>
<dbReference type="GO" id="GO:0006422">
    <property type="term" value="P:aspartyl-tRNA aminoacylation"/>
    <property type="evidence" value="ECO:0007669"/>
    <property type="project" value="UniProtKB-UniRule"/>
</dbReference>
<dbReference type="CDD" id="cd00777">
    <property type="entry name" value="AspRS_core"/>
    <property type="match status" value="1"/>
</dbReference>
<dbReference type="CDD" id="cd04317">
    <property type="entry name" value="EcAspRS_like_N"/>
    <property type="match status" value="1"/>
</dbReference>
<dbReference type="Gene3D" id="3.30.930.10">
    <property type="entry name" value="Bira Bifunctional Protein, Domain 2"/>
    <property type="match status" value="1"/>
</dbReference>
<dbReference type="Gene3D" id="3.30.1360.30">
    <property type="entry name" value="GAD-like domain"/>
    <property type="match status" value="1"/>
</dbReference>
<dbReference type="Gene3D" id="2.40.50.140">
    <property type="entry name" value="Nucleic acid-binding proteins"/>
    <property type="match status" value="1"/>
</dbReference>
<dbReference type="HAMAP" id="MF_00044">
    <property type="entry name" value="Asp_tRNA_synth_type1"/>
    <property type="match status" value="1"/>
</dbReference>
<dbReference type="InterPro" id="IPR004364">
    <property type="entry name" value="Aa-tRNA-synt_II"/>
</dbReference>
<dbReference type="InterPro" id="IPR006195">
    <property type="entry name" value="aa-tRNA-synth_II"/>
</dbReference>
<dbReference type="InterPro" id="IPR045864">
    <property type="entry name" value="aa-tRNA-synth_II/BPL/LPL"/>
</dbReference>
<dbReference type="InterPro" id="IPR004524">
    <property type="entry name" value="Asp-tRNA-ligase_1"/>
</dbReference>
<dbReference type="InterPro" id="IPR047089">
    <property type="entry name" value="Asp-tRNA-ligase_1_N"/>
</dbReference>
<dbReference type="InterPro" id="IPR002312">
    <property type="entry name" value="Asp/Asn-tRNA-synth_IIb"/>
</dbReference>
<dbReference type="InterPro" id="IPR047090">
    <property type="entry name" value="AspRS_core"/>
</dbReference>
<dbReference type="InterPro" id="IPR004115">
    <property type="entry name" value="GAD-like_sf"/>
</dbReference>
<dbReference type="InterPro" id="IPR029351">
    <property type="entry name" value="GAD_dom"/>
</dbReference>
<dbReference type="InterPro" id="IPR012340">
    <property type="entry name" value="NA-bd_OB-fold"/>
</dbReference>
<dbReference type="InterPro" id="IPR004365">
    <property type="entry name" value="NA-bd_OB_tRNA"/>
</dbReference>
<dbReference type="NCBIfam" id="TIGR00459">
    <property type="entry name" value="aspS_bact"/>
    <property type="match status" value="1"/>
</dbReference>
<dbReference type="NCBIfam" id="NF001750">
    <property type="entry name" value="PRK00476.1"/>
    <property type="match status" value="1"/>
</dbReference>
<dbReference type="PANTHER" id="PTHR22594:SF5">
    <property type="entry name" value="ASPARTATE--TRNA LIGASE, MITOCHONDRIAL"/>
    <property type="match status" value="1"/>
</dbReference>
<dbReference type="PANTHER" id="PTHR22594">
    <property type="entry name" value="ASPARTYL/LYSYL-TRNA SYNTHETASE"/>
    <property type="match status" value="1"/>
</dbReference>
<dbReference type="Pfam" id="PF02938">
    <property type="entry name" value="GAD"/>
    <property type="match status" value="1"/>
</dbReference>
<dbReference type="Pfam" id="PF00152">
    <property type="entry name" value="tRNA-synt_2"/>
    <property type="match status" value="1"/>
</dbReference>
<dbReference type="Pfam" id="PF01336">
    <property type="entry name" value="tRNA_anti-codon"/>
    <property type="match status" value="1"/>
</dbReference>
<dbReference type="PRINTS" id="PR01042">
    <property type="entry name" value="TRNASYNTHASP"/>
</dbReference>
<dbReference type="SUPFAM" id="SSF55681">
    <property type="entry name" value="Class II aaRS and biotin synthetases"/>
    <property type="match status" value="1"/>
</dbReference>
<dbReference type="SUPFAM" id="SSF55261">
    <property type="entry name" value="GAD domain-like"/>
    <property type="match status" value="1"/>
</dbReference>
<dbReference type="SUPFAM" id="SSF50249">
    <property type="entry name" value="Nucleic acid-binding proteins"/>
    <property type="match status" value="1"/>
</dbReference>
<dbReference type="PROSITE" id="PS50862">
    <property type="entry name" value="AA_TRNA_LIGASE_II"/>
    <property type="match status" value="1"/>
</dbReference>
<reference key="1">
    <citation type="journal article" date="2007" name="Proc. Natl. Acad. Sci. U.S.A.">
        <title>Deep-sea vent epsilon-proteobacterial genomes provide insights into emergence of pathogens.</title>
        <authorList>
            <person name="Nakagawa S."/>
            <person name="Takaki Y."/>
            <person name="Shimamura S."/>
            <person name="Reysenbach A.-L."/>
            <person name="Takai K."/>
            <person name="Horikoshi K."/>
        </authorList>
    </citation>
    <scope>NUCLEOTIDE SEQUENCE [LARGE SCALE GENOMIC DNA]</scope>
    <source>
        <strain>NBC37-1</strain>
    </source>
</reference>
<keyword id="KW-0030">Aminoacyl-tRNA synthetase</keyword>
<keyword id="KW-0067">ATP-binding</keyword>
<keyword id="KW-0963">Cytoplasm</keyword>
<keyword id="KW-0436">Ligase</keyword>
<keyword id="KW-0547">Nucleotide-binding</keyword>
<keyword id="KW-0648">Protein biosynthesis</keyword>
<proteinExistence type="inferred from homology"/>
<name>SYDND_SULNB</name>